<gene>
    <name evidence="1" type="primary">recA</name>
    <name type="ordered locus">CBU_1054</name>
</gene>
<sequence>MDNRSNALNAALSQIERQFGKGSVMRLGDPGLIPDIDVISTGSLGLDIALGVGGLPRGRIIEIYGPEASGKTTLALQTIASCQRMGGTAAFVDAEHALDAIYAGKLGVKVEDLLVSQPDTGEQALEITDMLVRSGAVDLIVIDSVAALTPKAEIEGDMGDSHMGLQARLMSQALRKLTANIKKSNTLVIFINQIRMKIGVMFGNPETTTGGNALKFYSSVRLDIRRIGAIKKGEEILGSETRVKVVKNKVAPPFRQVEFDILYGLGISRESELIDLGVKNELVEKAGAWYSYNGERIGQGKENVRQFFLENPKIAGEIETRLREKLLPHRQGEKIAEEVNAAE</sequence>
<evidence type="ECO:0000255" key="1">
    <source>
        <dbReference type="HAMAP-Rule" id="MF_00268"/>
    </source>
</evidence>
<keyword id="KW-0067">ATP-binding</keyword>
<keyword id="KW-0963">Cytoplasm</keyword>
<keyword id="KW-0227">DNA damage</keyword>
<keyword id="KW-0233">DNA recombination</keyword>
<keyword id="KW-0234">DNA repair</keyword>
<keyword id="KW-0238">DNA-binding</keyword>
<keyword id="KW-0547">Nucleotide-binding</keyword>
<keyword id="KW-1185">Reference proteome</keyword>
<keyword id="KW-0742">SOS response</keyword>
<accession>Q83CQ4</accession>
<reference key="1">
    <citation type="journal article" date="2003" name="Proc. Natl. Acad. Sci. U.S.A.">
        <title>Complete genome sequence of the Q-fever pathogen, Coxiella burnetii.</title>
        <authorList>
            <person name="Seshadri R."/>
            <person name="Paulsen I.T."/>
            <person name="Eisen J.A."/>
            <person name="Read T.D."/>
            <person name="Nelson K.E."/>
            <person name="Nelson W.C."/>
            <person name="Ward N.L."/>
            <person name="Tettelin H."/>
            <person name="Davidsen T.M."/>
            <person name="Beanan M.J."/>
            <person name="DeBoy R.T."/>
            <person name="Daugherty S.C."/>
            <person name="Brinkac L.M."/>
            <person name="Madupu R."/>
            <person name="Dodson R.J."/>
            <person name="Khouri H.M."/>
            <person name="Lee K.H."/>
            <person name="Carty H.A."/>
            <person name="Scanlan D."/>
            <person name="Heinzen R.A."/>
            <person name="Thompson H.A."/>
            <person name="Samuel J.E."/>
            <person name="Fraser C.M."/>
            <person name="Heidelberg J.F."/>
        </authorList>
    </citation>
    <scope>NUCLEOTIDE SEQUENCE [LARGE SCALE GENOMIC DNA]</scope>
    <source>
        <strain>RSA 493 / Nine Mile phase I</strain>
    </source>
</reference>
<protein>
    <recommendedName>
        <fullName evidence="1">Protein RecA</fullName>
    </recommendedName>
    <alternativeName>
        <fullName evidence="1">Recombinase A</fullName>
    </alternativeName>
</protein>
<name>RECA_COXBU</name>
<feature type="chain" id="PRO_0000122699" description="Protein RecA">
    <location>
        <begin position="1"/>
        <end position="343"/>
    </location>
</feature>
<proteinExistence type="inferred from homology"/>
<organism>
    <name type="scientific">Coxiella burnetii (strain RSA 493 / Nine Mile phase I)</name>
    <dbReference type="NCBI Taxonomy" id="227377"/>
    <lineage>
        <taxon>Bacteria</taxon>
        <taxon>Pseudomonadati</taxon>
        <taxon>Pseudomonadota</taxon>
        <taxon>Gammaproteobacteria</taxon>
        <taxon>Legionellales</taxon>
        <taxon>Coxiellaceae</taxon>
        <taxon>Coxiella</taxon>
    </lineage>
</organism>
<comment type="function">
    <text evidence="1">Can catalyze the hydrolysis of ATP in the presence of single-stranded DNA, the ATP-dependent uptake of single-stranded DNA by duplex DNA, and the ATP-dependent hybridization of homologous single-stranded DNAs. It interacts with LexA causing its activation and leading to its autocatalytic cleavage.</text>
</comment>
<comment type="subcellular location">
    <subcellularLocation>
        <location evidence="1">Cytoplasm</location>
    </subcellularLocation>
</comment>
<comment type="similarity">
    <text evidence="1">Belongs to the RecA family.</text>
</comment>
<dbReference type="EMBL" id="AE016828">
    <property type="protein sequence ID" value="AAO90569.1"/>
    <property type="molecule type" value="Genomic_DNA"/>
</dbReference>
<dbReference type="RefSeq" id="NP_820055.1">
    <property type="nucleotide sequence ID" value="NC_002971.4"/>
</dbReference>
<dbReference type="RefSeq" id="WP_005772330.1">
    <property type="nucleotide sequence ID" value="NZ_CDBG01000001.1"/>
</dbReference>
<dbReference type="SMR" id="Q83CQ4"/>
<dbReference type="STRING" id="227377.CBU_1054"/>
<dbReference type="EnsemblBacteria" id="AAO90569">
    <property type="protein sequence ID" value="AAO90569"/>
    <property type="gene ID" value="CBU_1054"/>
</dbReference>
<dbReference type="GeneID" id="1208955"/>
<dbReference type="KEGG" id="cbu:CBU_1054"/>
<dbReference type="PATRIC" id="fig|227377.7.peg.1045"/>
<dbReference type="eggNOG" id="COG0468">
    <property type="taxonomic scope" value="Bacteria"/>
</dbReference>
<dbReference type="HOGENOM" id="CLU_040469_3_2_6"/>
<dbReference type="OrthoDB" id="9776733at2"/>
<dbReference type="Proteomes" id="UP000002671">
    <property type="component" value="Chromosome"/>
</dbReference>
<dbReference type="GO" id="GO:0005737">
    <property type="term" value="C:cytoplasm"/>
    <property type="evidence" value="ECO:0007669"/>
    <property type="project" value="UniProtKB-SubCell"/>
</dbReference>
<dbReference type="GO" id="GO:0005524">
    <property type="term" value="F:ATP binding"/>
    <property type="evidence" value="ECO:0007669"/>
    <property type="project" value="UniProtKB-UniRule"/>
</dbReference>
<dbReference type="GO" id="GO:0016887">
    <property type="term" value="F:ATP hydrolysis activity"/>
    <property type="evidence" value="ECO:0007669"/>
    <property type="project" value="InterPro"/>
</dbReference>
<dbReference type="GO" id="GO:0140664">
    <property type="term" value="F:ATP-dependent DNA damage sensor activity"/>
    <property type="evidence" value="ECO:0007669"/>
    <property type="project" value="InterPro"/>
</dbReference>
<dbReference type="GO" id="GO:0003684">
    <property type="term" value="F:damaged DNA binding"/>
    <property type="evidence" value="ECO:0007669"/>
    <property type="project" value="UniProtKB-UniRule"/>
</dbReference>
<dbReference type="GO" id="GO:0003697">
    <property type="term" value="F:single-stranded DNA binding"/>
    <property type="evidence" value="ECO:0007669"/>
    <property type="project" value="UniProtKB-UniRule"/>
</dbReference>
<dbReference type="GO" id="GO:0006310">
    <property type="term" value="P:DNA recombination"/>
    <property type="evidence" value="ECO:0007669"/>
    <property type="project" value="UniProtKB-UniRule"/>
</dbReference>
<dbReference type="GO" id="GO:0006281">
    <property type="term" value="P:DNA repair"/>
    <property type="evidence" value="ECO:0007669"/>
    <property type="project" value="UniProtKB-UniRule"/>
</dbReference>
<dbReference type="GO" id="GO:0009432">
    <property type="term" value="P:SOS response"/>
    <property type="evidence" value="ECO:0007669"/>
    <property type="project" value="UniProtKB-UniRule"/>
</dbReference>
<dbReference type="CDD" id="cd00983">
    <property type="entry name" value="RecA"/>
    <property type="match status" value="1"/>
</dbReference>
<dbReference type="FunFam" id="3.40.50.300:FF:000087">
    <property type="entry name" value="Recombinase RecA"/>
    <property type="match status" value="1"/>
</dbReference>
<dbReference type="Gene3D" id="3.40.50.300">
    <property type="entry name" value="P-loop containing nucleotide triphosphate hydrolases"/>
    <property type="match status" value="1"/>
</dbReference>
<dbReference type="HAMAP" id="MF_00268">
    <property type="entry name" value="RecA"/>
    <property type="match status" value="1"/>
</dbReference>
<dbReference type="InterPro" id="IPR003593">
    <property type="entry name" value="AAA+_ATPase"/>
</dbReference>
<dbReference type="InterPro" id="IPR013765">
    <property type="entry name" value="DNA_recomb/repair_RecA"/>
</dbReference>
<dbReference type="InterPro" id="IPR020584">
    <property type="entry name" value="DNA_recomb/repair_RecA_CS"/>
</dbReference>
<dbReference type="InterPro" id="IPR027417">
    <property type="entry name" value="P-loop_NTPase"/>
</dbReference>
<dbReference type="InterPro" id="IPR049261">
    <property type="entry name" value="RecA-like_C"/>
</dbReference>
<dbReference type="InterPro" id="IPR049428">
    <property type="entry name" value="RecA-like_N"/>
</dbReference>
<dbReference type="InterPro" id="IPR020588">
    <property type="entry name" value="RecA_ATP-bd"/>
</dbReference>
<dbReference type="InterPro" id="IPR023400">
    <property type="entry name" value="RecA_C_sf"/>
</dbReference>
<dbReference type="InterPro" id="IPR020587">
    <property type="entry name" value="RecA_monomer-monomer_interface"/>
</dbReference>
<dbReference type="NCBIfam" id="TIGR02012">
    <property type="entry name" value="tigrfam_recA"/>
    <property type="match status" value="1"/>
</dbReference>
<dbReference type="PANTHER" id="PTHR45900:SF1">
    <property type="entry name" value="MITOCHONDRIAL DNA REPAIR PROTEIN RECA HOMOLOG-RELATED"/>
    <property type="match status" value="1"/>
</dbReference>
<dbReference type="PANTHER" id="PTHR45900">
    <property type="entry name" value="RECA"/>
    <property type="match status" value="1"/>
</dbReference>
<dbReference type="Pfam" id="PF00154">
    <property type="entry name" value="RecA"/>
    <property type="match status" value="1"/>
</dbReference>
<dbReference type="Pfam" id="PF21096">
    <property type="entry name" value="RecA_C"/>
    <property type="match status" value="1"/>
</dbReference>
<dbReference type="PRINTS" id="PR00142">
    <property type="entry name" value="RECA"/>
</dbReference>
<dbReference type="SMART" id="SM00382">
    <property type="entry name" value="AAA"/>
    <property type="match status" value="1"/>
</dbReference>
<dbReference type="SUPFAM" id="SSF52540">
    <property type="entry name" value="P-loop containing nucleoside triphosphate hydrolases"/>
    <property type="match status" value="1"/>
</dbReference>
<dbReference type="SUPFAM" id="SSF54752">
    <property type="entry name" value="RecA protein, C-terminal domain"/>
    <property type="match status" value="1"/>
</dbReference>
<dbReference type="PROSITE" id="PS00321">
    <property type="entry name" value="RECA_1"/>
    <property type="match status" value="1"/>
</dbReference>
<dbReference type="PROSITE" id="PS50162">
    <property type="entry name" value="RECA_2"/>
    <property type="match status" value="1"/>
</dbReference>
<dbReference type="PROSITE" id="PS50163">
    <property type="entry name" value="RECA_3"/>
    <property type="match status" value="1"/>
</dbReference>